<gene>
    <name evidence="1" type="primary">FEN1</name>
    <name type="ORF">Kpol_1033p65</name>
</gene>
<feature type="chain" id="PRO_0000403605" description="Flap endonuclease 1">
    <location>
        <begin position="1"/>
        <end position="377"/>
    </location>
</feature>
<feature type="region of interest" description="N-domain">
    <location>
        <begin position="1"/>
        <end position="105"/>
    </location>
</feature>
<feature type="region of interest" description="Disordered" evidence="2">
    <location>
        <begin position="99"/>
        <end position="119"/>
    </location>
</feature>
<feature type="region of interest" description="I-domain">
    <location>
        <begin position="120"/>
        <end position="251"/>
    </location>
</feature>
<feature type="region of interest" description="Interaction with PCNA" evidence="1">
    <location>
        <begin position="338"/>
        <end position="346"/>
    </location>
</feature>
<feature type="binding site" evidence="1">
    <location>
        <position position="34"/>
    </location>
    <ligand>
        <name>Mg(2+)</name>
        <dbReference type="ChEBI" id="CHEBI:18420"/>
        <label>1</label>
    </ligand>
</feature>
<feature type="binding site" evidence="1">
    <location>
        <position position="47"/>
    </location>
    <ligand>
        <name>DNA</name>
        <dbReference type="ChEBI" id="CHEBI:16991"/>
    </ligand>
</feature>
<feature type="binding site" evidence="1">
    <location>
        <position position="71"/>
    </location>
    <ligand>
        <name>DNA</name>
        <dbReference type="ChEBI" id="CHEBI:16991"/>
    </ligand>
</feature>
<feature type="binding site" evidence="1">
    <location>
        <position position="87"/>
    </location>
    <ligand>
        <name>Mg(2+)</name>
        <dbReference type="ChEBI" id="CHEBI:18420"/>
        <label>1</label>
    </ligand>
</feature>
<feature type="binding site" evidence="1">
    <location>
        <position position="156"/>
    </location>
    <ligand>
        <name>DNA</name>
        <dbReference type="ChEBI" id="CHEBI:16991"/>
    </ligand>
</feature>
<feature type="binding site" evidence="1">
    <location>
        <position position="156"/>
    </location>
    <ligand>
        <name>Mg(2+)</name>
        <dbReference type="ChEBI" id="CHEBI:18420"/>
        <label>1</label>
    </ligand>
</feature>
<feature type="binding site" evidence="1">
    <location>
        <position position="158"/>
    </location>
    <ligand>
        <name>Mg(2+)</name>
        <dbReference type="ChEBI" id="CHEBI:18420"/>
        <label>1</label>
    </ligand>
</feature>
<feature type="binding site" evidence="1">
    <location>
        <position position="177"/>
    </location>
    <ligand>
        <name>Mg(2+)</name>
        <dbReference type="ChEBI" id="CHEBI:18420"/>
        <label>2</label>
    </ligand>
</feature>
<feature type="binding site" evidence="1">
    <location>
        <position position="179"/>
    </location>
    <ligand>
        <name>Mg(2+)</name>
        <dbReference type="ChEBI" id="CHEBI:18420"/>
        <label>2</label>
    </ligand>
</feature>
<feature type="binding site" evidence="1">
    <location>
        <position position="229"/>
    </location>
    <ligand>
        <name>DNA</name>
        <dbReference type="ChEBI" id="CHEBI:16991"/>
    </ligand>
</feature>
<feature type="binding site" evidence="1">
    <location>
        <position position="231"/>
    </location>
    <ligand>
        <name>DNA</name>
        <dbReference type="ChEBI" id="CHEBI:16991"/>
    </ligand>
</feature>
<feature type="binding site" evidence="1">
    <location>
        <position position="231"/>
    </location>
    <ligand>
        <name>Mg(2+)</name>
        <dbReference type="ChEBI" id="CHEBI:18420"/>
        <label>2</label>
    </ligand>
</feature>
<sequence>MGIKGLNAIISEHVPSAVRKSDIKTFFGRKVAIDASMSLYQFLIAVRQQDGGQLTNEAGETTSHLMGMFYRTLRMIDNGIKPCYVFDGKPPVLKSHELSKRTARREETEKKLQEATDQAEKMKQERRLVKVSKEHNDEAKQLLELMGIPYITAPCEAESQCAELAKCGKVYAAASEDMDTLCYRTPYLLRHLTFSEAKKEPIHEIDTELVLKGLDLTLEQFVDLGIMLGCDYCDSIKGVGPVTALKLIKEYGSLEKIIEYIESDSSNSKWKIPNDWPYKDARELFLKPDVINGNEVELKWQPPNEKGLIDFLCGEKKFSEERVKSGIERLKKGLKSGVQGRLDGFFQVVPKTKEQLAKAAAKAKAAKKSGKVTKKRR</sequence>
<protein>
    <recommendedName>
        <fullName evidence="1">Flap endonuclease 1</fullName>
        <shortName evidence="1">FEN-1</shortName>
        <ecNumber evidence="1">3.1.-.-</ecNumber>
    </recommendedName>
    <alternativeName>
        <fullName evidence="1">Flap structure-specific endonuclease 1</fullName>
    </alternativeName>
</protein>
<accession>A7TJ59</accession>
<reference key="1">
    <citation type="journal article" date="2007" name="Proc. Natl. Acad. Sci. U.S.A.">
        <title>Independent sorting-out of thousands of duplicated gene pairs in two yeast species descended from a whole-genome duplication.</title>
        <authorList>
            <person name="Scannell D.R."/>
            <person name="Frank A.C."/>
            <person name="Conant G.C."/>
            <person name="Byrne K.P."/>
            <person name="Woolfit M."/>
            <person name="Wolfe K.H."/>
        </authorList>
    </citation>
    <scope>NUCLEOTIDE SEQUENCE [LARGE SCALE GENOMIC DNA]</scope>
    <source>
        <strain>ATCC 22028 / DSM 70294 / BCRC 21397 / CBS 2163 / NBRC 10782 / NRRL Y-8283 / UCD 57-17</strain>
    </source>
</reference>
<proteinExistence type="inferred from homology"/>
<comment type="function">
    <text evidence="1">Structure-specific nuclease with 5'-flap endonuclease and 5'-3' exonuclease activities involved in DNA replication and repair. During DNA replication, cleaves the 5'-overhanging flap structure that is generated by displacement synthesis when DNA polymerase encounters the 5'-end of a downstream Okazaki fragment. It enters the flap from the 5'-end and then tracks to cleave the flap base, leaving a nick for ligation. Also involved in the long patch base excision repair (LP-BER) pathway, by cleaving within the apurinic/apyrimidinic (AP) site-terminated flap. Acts as a genome stabilization factor that prevents flaps from equilibrating into structures that lead to duplications and deletions. Also possesses 5'-3' exonuclease activity on nicked or gapped double-stranded DNA, and exhibits RNase H activity. Also involved in replication and repair of rDNA and in repairing mitochondrial DNA.</text>
</comment>
<comment type="cofactor">
    <cofactor evidence="1">
        <name>Mg(2+)</name>
        <dbReference type="ChEBI" id="CHEBI:18420"/>
    </cofactor>
    <text evidence="1">Binds 2 magnesium ions per subunit. They probably participate in the reaction catalyzed by the enzyme. May bind an additional third magnesium ion after substrate binding.</text>
</comment>
<comment type="subunit">
    <text evidence="1">Interacts with PCNA. Three molecules of FEN1 bind to one PCNA trimer with each molecule binding to one PCNA monomer. PCNA stimulates the nuclease activity without altering cleavage specificity.</text>
</comment>
<comment type="subcellular location">
    <subcellularLocation>
        <location evidence="1">Nucleus</location>
        <location evidence="1">Nucleolus</location>
    </subcellularLocation>
    <subcellularLocation>
        <location evidence="1">Nucleus</location>
        <location evidence="1">Nucleoplasm</location>
    </subcellularLocation>
    <subcellularLocation>
        <location evidence="1">Mitochondrion</location>
    </subcellularLocation>
    <text evidence="1">Resides mostly in the nucleoli and relocalizes to the nucleoplasm upon DNA damage.</text>
</comment>
<comment type="PTM">
    <text evidence="1">Phosphorylated. Phosphorylation upon DNA damage induces relocalization to the nuclear plasma.</text>
</comment>
<comment type="similarity">
    <text evidence="1">Belongs to the XPG/RAD2 endonuclease family. FEN1 subfamily.</text>
</comment>
<keyword id="KW-0227">DNA damage</keyword>
<keyword id="KW-0234">DNA repair</keyword>
<keyword id="KW-0235">DNA replication</keyword>
<keyword id="KW-0255">Endonuclease</keyword>
<keyword id="KW-0269">Exonuclease</keyword>
<keyword id="KW-0378">Hydrolase</keyword>
<keyword id="KW-0460">Magnesium</keyword>
<keyword id="KW-0479">Metal-binding</keyword>
<keyword id="KW-0496">Mitochondrion</keyword>
<keyword id="KW-0540">Nuclease</keyword>
<keyword id="KW-0539">Nucleus</keyword>
<keyword id="KW-0597">Phosphoprotein</keyword>
<keyword id="KW-1185">Reference proteome</keyword>
<evidence type="ECO:0000255" key="1">
    <source>
        <dbReference type="HAMAP-Rule" id="MF_03140"/>
    </source>
</evidence>
<evidence type="ECO:0000256" key="2">
    <source>
        <dbReference type="SAM" id="MobiDB-lite"/>
    </source>
</evidence>
<dbReference type="EC" id="3.1.-.-" evidence="1"/>
<dbReference type="EMBL" id="DS480399">
    <property type="protein sequence ID" value="EDO17758.1"/>
    <property type="molecule type" value="Genomic_DNA"/>
</dbReference>
<dbReference type="RefSeq" id="XP_001645616.1">
    <property type="nucleotide sequence ID" value="XM_001645566.1"/>
</dbReference>
<dbReference type="SMR" id="A7TJ59"/>
<dbReference type="FunCoup" id="A7TJ59">
    <property type="interactions" value="1105"/>
</dbReference>
<dbReference type="STRING" id="436907.A7TJ59"/>
<dbReference type="GeneID" id="5546005"/>
<dbReference type="KEGG" id="vpo:Kpol_1033p65"/>
<dbReference type="eggNOG" id="KOG2519">
    <property type="taxonomic scope" value="Eukaryota"/>
</dbReference>
<dbReference type="HOGENOM" id="CLU_032444_2_0_1"/>
<dbReference type="InParanoid" id="A7TJ59"/>
<dbReference type="OMA" id="MGIPWVQ"/>
<dbReference type="OrthoDB" id="1937206at2759"/>
<dbReference type="PhylomeDB" id="A7TJ59"/>
<dbReference type="Proteomes" id="UP000000267">
    <property type="component" value="Unassembled WGS sequence"/>
</dbReference>
<dbReference type="GO" id="GO:0005829">
    <property type="term" value="C:cytosol"/>
    <property type="evidence" value="ECO:0007669"/>
    <property type="project" value="EnsemblFungi"/>
</dbReference>
<dbReference type="GO" id="GO:0005739">
    <property type="term" value="C:mitochondrion"/>
    <property type="evidence" value="ECO:0007669"/>
    <property type="project" value="UniProtKB-SubCell"/>
</dbReference>
<dbReference type="GO" id="GO:0005730">
    <property type="term" value="C:nucleolus"/>
    <property type="evidence" value="ECO:0007669"/>
    <property type="project" value="UniProtKB-SubCell"/>
</dbReference>
<dbReference type="GO" id="GO:0005654">
    <property type="term" value="C:nucleoplasm"/>
    <property type="evidence" value="ECO:0007669"/>
    <property type="project" value="UniProtKB-SubCell"/>
</dbReference>
<dbReference type="GO" id="GO:0008409">
    <property type="term" value="F:5'-3' exonuclease activity"/>
    <property type="evidence" value="ECO:0007669"/>
    <property type="project" value="UniProtKB-UniRule"/>
</dbReference>
<dbReference type="GO" id="GO:0017108">
    <property type="term" value="F:5'-flap endonuclease activity"/>
    <property type="evidence" value="ECO:0007669"/>
    <property type="project" value="UniProtKB-UniRule"/>
</dbReference>
<dbReference type="GO" id="GO:0003677">
    <property type="term" value="F:DNA binding"/>
    <property type="evidence" value="ECO:0007669"/>
    <property type="project" value="UniProtKB-UniRule"/>
</dbReference>
<dbReference type="GO" id="GO:0000287">
    <property type="term" value="F:magnesium ion binding"/>
    <property type="evidence" value="ECO:0007669"/>
    <property type="project" value="UniProtKB-UniRule"/>
</dbReference>
<dbReference type="GO" id="GO:0006284">
    <property type="term" value="P:base-excision repair"/>
    <property type="evidence" value="ECO:0007669"/>
    <property type="project" value="UniProtKB-UniRule"/>
</dbReference>
<dbReference type="GO" id="GO:0043137">
    <property type="term" value="P:DNA replication, removal of RNA primer"/>
    <property type="evidence" value="ECO:0007669"/>
    <property type="project" value="UniProtKB-UniRule"/>
</dbReference>
<dbReference type="GO" id="GO:0006303">
    <property type="term" value="P:double-strand break repair via nonhomologous end joining"/>
    <property type="evidence" value="ECO:0007669"/>
    <property type="project" value="EnsemblFungi"/>
</dbReference>
<dbReference type="GO" id="GO:0007534">
    <property type="term" value="P:gene conversion at mating-type locus"/>
    <property type="evidence" value="ECO:0007669"/>
    <property type="project" value="EnsemblFungi"/>
</dbReference>
<dbReference type="GO" id="GO:0035753">
    <property type="term" value="P:maintenance of DNA trinucleotide repeats"/>
    <property type="evidence" value="ECO:0007669"/>
    <property type="project" value="EnsemblFungi"/>
</dbReference>
<dbReference type="CDD" id="cd09907">
    <property type="entry name" value="H3TH_FEN1-Euk"/>
    <property type="match status" value="1"/>
</dbReference>
<dbReference type="CDD" id="cd09867">
    <property type="entry name" value="PIN_FEN1"/>
    <property type="match status" value="1"/>
</dbReference>
<dbReference type="FunFam" id="1.10.150.20:FF:000009">
    <property type="entry name" value="Flap endonuclease 1"/>
    <property type="match status" value="1"/>
</dbReference>
<dbReference type="FunFam" id="3.40.50.1010:FF:000003">
    <property type="entry name" value="Flap endonuclease 1"/>
    <property type="match status" value="1"/>
</dbReference>
<dbReference type="Gene3D" id="1.10.150.20">
    <property type="entry name" value="5' to 3' exonuclease, C-terminal subdomain"/>
    <property type="match status" value="1"/>
</dbReference>
<dbReference type="Gene3D" id="3.40.50.1010">
    <property type="entry name" value="5'-nuclease"/>
    <property type="match status" value="1"/>
</dbReference>
<dbReference type="HAMAP" id="MF_00614">
    <property type="entry name" value="Fen"/>
    <property type="match status" value="1"/>
</dbReference>
<dbReference type="InterPro" id="IPR036279">
    <property type="entry name" value="5-3_exonuclease_C_sf"/>
</dbReference>
<dbReference type="InterPro" id="IPR023426">
    <property type="entry name" value="Flap_endonuc"/>
</dbReference>
<dbReference type="InterPro" id="IPR008918">
    <property type="entry name" value="HhH2"/>
</dbReference>
<dbReference type="InterPro" id="IPR029060">
    <property type="entry name" value="PIN-like_dom_sf"/>
</dbReference>
<dbReference type="InterPro" id="IPR006086">
    <property type="entry name" value="XPG-I_dom"/>
</dbReference>
<dbReference type="InterPro" id="IPR006084">
    <property type="entry name" value="XPG/Rad2"/>
</dbReference>
<dbReference type="InterPro" id="IPR019974">
    <property type="entry name" value="XPG_CS"/>
</dbReference>
<dbReference type="InterPro" id="IPR006085">
    <property type="entry name" value="XPG_DNA_repair_N"/>
</dbReference>
<dbReference type="PANTHER" id="PTHR11081:SF9">
    <property type="entry name" value="FLAP ENDONUCLEASE 1"/>
    <property type="match status" value="1"/>
</dbReference>
<dbReference type="PANTHER" id="PTHR11081">
    <property type="entry name" value="FLAP ENDONUCLEASE FAMILY MEMBER"/>
    <property type="match status" value="1"/>
</dbReference>
<dbReference type="Pfam" id="PF00867">
    <property type="entry name" value="XPG_I"/>
    <property type="match status" value="1"/>
</dbReference>
<dbReference type="Pfam" id="PF00752">
    <property type="entry name" value="XPG_N"/>
    <property type="match status" value="1"/>
</dbReference>
<dbReference type="PRINTS" id="PR00853">
    <property type="entry name" value="XPGRADSUPER"/>
</dbReference>
<dbReference type="SMART" id="SM00279">
    <property type="entry name" value="HhH2"/>
    <property type="match status" value="1"/>
</dbReference>
<dbReference type="SMART" id="SM00484">
    <property type="entry name" value="XPGI"/>
    <property type="match status" value="1"/>
</dbReference>
<dbReference type="SMART" id="SM00485">
    <property type="entry name" value="XPGN"/>
    <property type="match status" value="1"/>
</dbReference>
<dbReference type="SUPFAM" id="SSF47807">
    <property type="entry name" value="5' to 3' exonuclease, C-terminal subdomain"/>
    <property type="match status" value="1"/>
</dbReference>
<dbReference type="SUPFAM" id="SSF88723">
    <property type="entry name" value="PIN domain-like"/>
    <property type="match status" value="1"/>
</dbReference>
<dbReference type="PROSITE" id="PS00841">
    <property type="entry name" value="XPG_1"/>
    <property type="match status" value="1"/>
</dbReference>
<dbReference type="PROSITE" id="PS00842">
    <property type="entry name" value="XPG_2"/>
    <property type="match status" value="1"/>
</dbReference>
<name>FEN1_VANPO</name>
<organism>
    <name type="scientific">Vanderwaltozyma polyspora (strain ATCC 22028 / DSM 70294 / BCRC 21397 / CBS 2163 / NBRC 10782 / NRRL Y-8283 / UCD 57-17)</name>
    <name type="common">Kluyveromyces polysporus</name>
    <dbReference type="NCBI Taxonomy" id="436907"/>
    <lineage>
        <taxon>Eukaryota</taxon>
        <taxon>Fungi</taxon>
        <taxon>Dikarya</taxon>
        <taxon>Ascomycota</taxon>
        <taxon>Saccharomycotina</taxon>
        <taxon>Saccharomycetes</taxon>
        <taxon>Saccharomycetales</taxon>
        <taxon>Saccharomycetaceae</taxon>
        <taxon>Vanderwaltozyma</taxon>
    </lineage>
</organism>